<reference key="1">
    <citation type="journal article" date="2001" name="Nature">
        <title>Massive gene decay in the leprosy bacillus.</title>
        <authorList>
            <person name="Cole S.T."/>
            <person name="Eiglmeier K."/>
            <person name="Parkhill J."/>
            <person name="James K.D."/>
            <person name="Thomson N.R."/>
            <person name="Wheeler P.R."/>
            <person name="Honore N."/>
            <person name="Garnier T."/>
            <person name="Churcher C.M."/>
            <person name="Harris D.E."/>
            <person name="Mungall K.L."/>
            <person name="Basham D."/>
            <person name="Brown D."/>
            <person name="Chillingworth T."/>
            <person name="Connor R."/>
            <person name="Davies R.M."/>
            <person name="Devlin K."/>
            <person name="Duthoy S."/>
            <person name="Feltwell T."/>
            <person name="Fraser A."/>
            <person name="Hamlin N."/>
            <person name="Holroyd S."/>
            <person name="Hornsby T."/>
            <person name="Jagels K."/>
            <person name="Lacroix C."/>
            <person name="Maclean J."/>
            <person name="Moule S."/>
            <person name="Murphy L.D."/>
            <person name="Oliver K."/>
            <person name="Quail M.A."/>
            <person name="Rajandream M.A."/>
            <person name="Rutherford K.M."/>
            <person name="Rutter S."/>
            <person name="Seeger K."/>
            <person name="Simon S."/>
            <person name="Simmonds M."/>
            <person name="Skelton J."/>
            <person name="Squares R."/>
            <person name="Squares S."/>
            <person name="Stevens K."/>
            <person name="Taylor K."/>
            <person name="Whitehead S."/>
            <person name="Woodward J.R."/>
            <person name="Barrell B.G."/>
        </authorList>
    </citation>
    <scope>NUCLEOTIDE SEQUENCE [LARGE SCALE GENOMIC DNA]</scope>
    <source>
        <strain>TN</strain>
    </source>
</reference>
<gene>
    <name type="ordered locus">ML0918</name>
</gene>
<feature type="chain" id="PRO_0000163165" description="Purine nucleoside phosphorylase ML0918">
    <location>
        <begin position="1"/>
        <end position="249"/>
    </location>
</feature>
<feature type="binding site" evidence="2">
    <location>
        <position position="72"/>
    </location>
    <ligand>
        <name>Zn(2+)</name>
        <dbReference type="ChEBI" id="CHEBI:29105"/>
        <note>catalytic</note>
    </ligand>
</feature>
<feature type="binding site" evidence="2">
    <location>
        <position position="109"/>
    </location>
    <ligand>
        <name>Zn(2+)</name>
        <dbReference type="ChEBI" id="CHEBI:29105"/>
        <note>catalytic</note>
    </ligand>
</feature>
<feature type="binding site" evidence="2">
    <location>
        <position position="126"/>
    </location>
    <ligand>
        <name>Zn(2+)</name>
        <dbReference type="ChEBI" id="CHEBI:29105"/>
        <note>catalytic</note>
    </ligand>
</feature>
<accession>Q9CCE3</accession>
<proteinExistence type="inferred from homology"/>
<organism>
    <name type="scientific">Mycobacterium leprae (strain TN)</name>
    <dbReference type="NCBI Taxonomy" id="272631"/>
    <lineage>
        <taxon>Bacteria</taxon>
        <taxon>Bacillati</taxon>
        <taxon>Actinomycetota</taxon>
        <taxon>Actinomycetes</taxon>
        <taxon>Mycobacteriales</taxon>
        <taxon>Mycobacteriaceae</taxon>
        <taxon>Mycobacterium</taxon>
    </lineage>
</organism>
<evidence type="ECO:0000250" key="1">
    <source>
        <dbReference type="UniProtKB" id="P33644"/>
    </source>
</evidence>
<evidence type="ECO:0000250" key="2">
    <source>
        <dbReference type="UniProtKB" id="P84138"/>
    </source>
</evidence>
<evidence type="ECO:0000250" key="3">
    <source>
        <dbReference type="UniProtKB" id="Q1EIR0"/>
    </source>
</evidence>
<evidence type="ECO:0000305" key="4"/>
<name>PURNU_MYCLE</name>
<protein>
    <recommendedName>
        <fullName>Purine nucleoside phosphorylase ML0918</fullName>
        <ecNumber evidence="2">2.4.2.1</ecNumber>
    </recommendedName>
    <alternativeName>
        <fullName>Adenosine deaminase ML0918</fullName>
        <ecNumber evidence="2">3.5.4.4</ecNumber>
    </alternativeName>
    <alternativeName>
        <fullName>S-methyl-5'-thioadenosine phosphorylase ML0918</fullName>
        <ecNumber evidence="2">2.4.2.28</ecNumber>
    </alternativeName>
</protein>
<comment type="function">
    <text evidence="2">Purine nucleoside enzyme that catalyzes the phosphorolysis of adenosine and inosine nucleosides, yielding D-ribose 1-phosphate and the respective free bases, adenine and hypoxanthine. Also catalyzes the phosphorolysis of S-methyl-5'-thioadenosine into adenine and S-methyl-5-thio-alpha-D-ribose 1-phosphate. Also has adenosine deaminase activity.</text>
</comment>
<comment type="catalytic activity">
    <reaction evidence="2">
        <text>adenosine + phosphate = alpha-D-ribose 1-phosphate + adenine</text>
        <dbReference type="Rhea" id="RHEA:27642"/>
        <dbReference type="ChEBI" id="CHEBI:16335"/>
        <dbReference type="ChEBI" id="CHEBI:16708"/>
        <dbReference type="ChEBI" id="CHEBI:43474"/>
        <dbReference type="ChEBI" id="CHEBI:57720"/>
        <dbReference type="EC" id="2.4.2.1"/>
    </reaction>
    <physiologicalReaction direction="left-to-right" evidence="2">
        <dbReference type="Rhea" id="RHEA:27643"/>
    </physiologicalReaction>
</comment>
<comment type="catalytic activity">
    <reaction evidence="2">
        <text>S-methyl-5'-thioadenosine + phosphate = 5-(methylsulfanyl)-alpha-D-ribose 1-phosphate + adenine</text>
        <dbReference type="Rhea" id="RHEA:11852"/>
        <dbReference type="ChEBI" id="CHEBI:16708"/>
        <dbReference type="ChEBI" id="CHEBI:17509"/>
        <dbReference type="ChEBI" id="CHEBI:43474"/>
        <dbReference type="ChEBI" id="CHEBI:58533"/>
        <dbReference type="EC" id="2.4.2.28"/>
    </reaction>
    <physiologicalReaction direction="left-to-right" evidence="2">
        <dbReference type="Rhea" id="RHEA:11853"/>
    </physiologicalReaction>
</comment>
<comment type="catalytic activity">
    <reaction evidence="2">
        <text>inosine + phosphate = alpha-D-ribose 1-phosphate + hypoxanthine</text>
        <dbReference type="Rhea" id="RHEA:27646"/>
        <dbReference type="ChEBI" id="CHEBI:17368"/>
        <dbReference type="ChEBI" id="CHEBI:17596"/>
        <dbReference type="ChEBI" id="CHEBI:43474"/>
        <dbReference type="ChEBI" id="CHEBI:57720"/>
        <dbReference type="EC" id="2.4.2.1"/>
    </reaction>
    <physiologicalReaction direction="left-to-right" evidence="2">
        <dbReference type="Rhea" id="RHEA:27647"/>
    </physiologicalReaction>
</comment>
<comment type="catalytic activity">
    <reaction evidence="2">
        <text>adenosine + H2O + H(+) = inosine + NH4(+)</text>
        <dbReference type="Rhea" id="RHEA:24408"/>
        <dbReference type="ChEBI" id="CHEBI:15377"/>
        <dbReference type="ChEBI" id="CHEBI:15378"/>
        <dbReference type="ChEBI" id="CHEBI:16335"/>
        <dbReference type="ChEBI" id="CHEBI:17596"/>
        <dbReference type="ChEBI" id="CHEBI:28938"/>
        <dbReference type="EC" id="3.5.4.4"/>
    </reaction>
    <physiologicalReaction direction="left-to-right" evidence="2">
        <dbReference type="Rhea" id="RHEA:24409"/>
    </physiologicalReaction>
</comment>
<comment type="cofactor">
    <cofactor evidence="1">
        <name>Cu(2+)</name>
        <dbReference type="ChEBI" id="CHEBI:29036"/>
    </cofactor>
    <cofactor evidence="2">
        <name>Zn(2+)</name>
        <dbReference type="ChEBI" id="CHEBI:29105"/>
    </cofactor>
</comment>
<comment type="subunit">
    <text evidence="3">Homodimer.</text>
</comment>
<comment type="similarity">
    <text evidence="4">Belongs to the purine nucleoside phosphorylase YfiH/LACC1 family.</text>
</comment>
<sequence length="249" mass="26305">MGGFADTGQVSVRIRWVITMRAGGVLVSPFDFLDLGDHVGDDPDCGGHLSRAWLVAAIGLGVDRVVWMSQVHGDRVKVVHEPCDAVVDNTDALVTRTSQPALPVVTIHCVPVLLSDARPGVTAAVHVGEGRGSARCASPCDGYDAGPGCVRWRRDIAVLLGPAVSGRNYEVPVVIADGVEAASPDSCTTTRISAGTPGLDLRTGIACQFRDLGVMSIEDDPRRTVADRALFSHLQTVSTGRLASLVWME</sequence>
<dbReference type="EC" id="2.4.2.1" evidence="2"/>
<dbReference type="EC" id="3.5.4.4" evidence="2"/>
<dbReference type="EC" id="2.4.2.28" evidence="2"/>
<dbReference type="EMBL" id="AL583920">
    <property type="protein sequence ID" value="CAC31299.1"/>
    <property type="molecule type" value="Genomic_DNA"/>
</dbReference>
<dbReference type="PIR" id="H87023">
    <property type="entry name" value="H87023"/>
</dbReference>
<dbReference type="RefSeq" id="NP_301701.1">
    <property type="nucleotide sequence ID" value="NC_002677.1"/>
</dbReference>
<dbReference type="RefSeq" id="WP_010908025.1">
    <property type="nucleotide sequence ID" value="NC_002677.1"/>
</dbReference>
<dbReference type="SMR" id="Q9CCE3"/>
<dbReference type="STRING" id="272631.gene:17574744"/>
<dbReference type="KEGG" id="mle:ML0918"/>
<dbReference type="PATRIC" id="fig|272631.5.peg.1661"/>
<dbReference type="Leproma" id="ML0918"/>
<dbReference type="eggNOG" id="COG1496">
    <property type="taxonomic scope" value="Bacteria"/>
</dbReference>
<dbReference type="HOGENOM" id="CLU_065784_1_1_11"/>
<dbReference type="OrthoDB" id="4279at2"/>
<dbReference type="Proteomes" id="UP000000806">
    <property type="component" value="Chromosome"/>
</dbReference>
<dbReference type="GO" id="GO:0004000">
    <property type="term" value="F:adenosine deaminase activity"/>
    <property type="evidence" value="ECO:0007669"/>
    <property type="project" value="RHEA"/>
</dbReference>
<dbReference type="GO" id="GO:0005507">
    <property type="term" value="F:copper ion binding"/>
    <property type="evidence" value="ECO:0007669"/>
    <property type="project" value="TreeGrafter"/>
</dbReference>
<dbReference type="GO" id="GO:0016491">
    <property type="term" value="F:oxidoreductase activity"/>
    <property type="evidence" value="ECO:0007669"/>
    <property type="project" value="UniProtKB-KW"/>
</dbReference>
<dbReference type="GO" id="GO:0017061">
    <property type="term" value="F:S-methyl-5-thioadenosine phosphorylase activity"/>
    <property type="evidence" value="ECO:0007669"/>
    <property type="project" value="UniProtKB-EC"/>
</dbReference>
<dbReference type="CDD" id="cd16833">
    <property type="entry name" value="YfiH"/>
    <property type="match status" value="1"/>
</dbReference>
<dbReference type="Gene3D" id="3.60.140.10">
    <property type="entry name" value="CNF1/YfiH-like putative cysteine hydrolases"/>
    <property type="match status" value="1"/>
</dbReference>
<dbReference type="InterPro" id="IPR003730">
    <property type="entry name" value="Cu_polyphenol_OxRdtase"/>
</dbReference>
<dbReference type="InterPro" id="IPR038371">
    <property type="entry name" value="Cu_polyphenol_OxRdtase_sf"/>
</dbReference>
<dbReference type="InterPro" id="IPR011324">
    <property type="entry name" value="Cytotoxic_necrot_fac-like_cat"/>
</dbReference>
<dbReference type="PANTHER" id="PTHR30616:SF2">
    <property type="entry name" value="PURINE NUCLEOSIDE PHOSPHORYLASE LACC1"/>
    <property type="match status" value="1"/>
</dbReference>
<dbReference type="PANTHER" id="PTHR30616">
    <property type="entry name" value="UNCHARACTERIZED PROTEIN YFIH"/>
    <property type="match status" value="1"/>
</dbReference>
<dbReference type="Pfam" id="PF02578">
    <property type="entry name" value="Cu-oxidase_4"/>
    <property type="match status" value="1"/>
</dbReference>
<dbReference type="SUPFAM" id="SSF64438">
    <property type="entry name" value="CNF1/YfiH-like putative cysteine hydrolases"/>
    <property type="match status" value="1"/>
</dbReference>
<keyword id="KW-0186">Copper</keyword>
<keyword id="KW-0378">Hydrolase</keyword>
<keyword id="KW-0479">Metal-binding</keyword>
<keyword id="KW-0560">Oxidoreductase</keyword>
<keyword id="KW-1185">Reference proteome</keyword>
<keyword id="KW-0808">Transferase</keyword>
<keyword id="KW-0862">Zinc</keyword>